<evidence type="ECO:0000255" key="1">
    <source>
        <dbReference type="HAMAP-Rule" id="MF_01400"/>
    </source>
</evidence>
<evidence type="ECO:0000255" key="2">
    <source>
        <dbReference type="PROSITE-ProRule" id="PRU01126"/>
    </source>
</evidence>
<gene>
    <name evidence="1" type="primary">msrB</name>
    <name type="ordered locus">ABSDF2180</name>
</gene>
<feature type="chain" id="PRO_1000145346" description="Peptide methionine sulfoxide reductase MsrB">
    <location>
        <begin position="1"/>
        <end position="139"/>
    </location>
</feature>
<feature type="domain" description="MsrB" evidence="2">
    <location>
        <begin position="8"/>
        <end position="130"/>
    </location>
</feature>
<feature type="active site" description="Nucleophile" evidence="2">
    <location>
        <position position="119"/>
    </location>
</feature>
<feature type="binding site" evidence="2">
    <location>
        <position position="47"/>
    </location>
    <ligand>
        <name>Zn(2+)</name>
        <dbReference type="ChEBI" id="CHEBI:29105"/>
    </ligand>
</feature>
<feature type="binding site" evidence="2">
    <location>
        <position position="50"/>
    </location>
    <ligand>
        <name>Zn(2+)</name>
        <dbReference type="ChEBI" id="CHEBI:29105"/>
    </ligand>
</feature>
<feature type="binding site" evidence="2">
    <location>
        <position position="96"/>
    </location>
    <ligand>
        <name>Zn(2+)</name>
        <dbReference type="ChEBI" id="CHEBI:29105"/>
    </ligand>
</feature>
<feature type="binding site" evidence="2">
    <location>
        <position position="99"/>
    </location>
    <ligand>
        <name>Zn(2+)</name>
        <dbReference type="ChEBI" id="CHEBI:29105"/>
    </ligand>
</feature>
<proteinExistence type="inferred from homology"/>
<protein>
    <recommendedName>
        <fullName evidence="1">Peptide methionine sulfoxide reductase MsrB</fullName>
        <ecNumber evidence="1">1.8.4.12</ecNumber>
    </recommendedName>
    <alternativeName>
        <fullName evidence="1">Peptide-methionine (R)-S-oxide reductase</fullName>
    </alternativeName>
</protein>
<reference key="1">
    <citation type="journal article" date="2008" name="PLoS ONE">
        <title>Comparative analysis of Acinetobacters: three genomes for three lifestyles.</title>
        <authorList>
            <person name="Vallenet D."/>
            <person name="Nordmann P."/>
            <person name="Barbe V."/>
            <person name="Poirel L."/>
            <person name="Mangenot S."/>
            <person name="Bataille E."/>
            <person name="Dossat C."/>
            <person name="Gas S."/>
            <person name="Kreimeyer A."/>
            <person name="Lenoble P."/>
            <person name="Oztas S."/>
            <person name="Poulain J."/>
            <person name="Segurens B."/>
            <person name="Robert C."/>
            <person name="Abergel C."/>
            <person name="Claverie J.-M."/>
            <person name="Raoult D."/>
            <person name="Medigue C."/>
            <person name="Weissenbach J."/>
            <person name="Cruveiller S."/>
        </authorList>
    </citation>
    <scope>NUCLEOTIDE SEQUENCE [LARGE SCALE GENOMIC DNA]</scope>
    <source>
        <strain>SDF</strain>
    </source>
</reference>
<comment type="catalytic activity">
    <reaction evidence="1">
        <text>L-methionyl-[protein] + [thioredoxin]-disulfide + H2O = L-methionyl-(R)-S-oxide-[protein] + [thioredoxin]-dithiol</text>
        <dbReference type="Rhea" id="RHEA:24164"/>
        <dbReference type="Rhea" id="RHEA-COMP:10698"/>
        <dbReference type="Rhea" id="RHEA-COMP:10700"/>
        <dbReference type="Rhea" id="RHEA-COMP:12313"/>
        <dbReference type="Rhea" id="RHEA-COMP:12314"/>
        <dbReference type="ChEBI" id="CHEBI:15377"/>
        <dbReference type="ChEBI" id="CHEBI:16044"/>
        <dbReference type="ChEBI" id="CHEBI:29950"/>
        <dbReference type="ChEBI" id="CHEBI:45764"/>
        <dbReference type="ChEBI" id="CHEBI:50058"/>
        <dbReference type="EC" id="1.8.4.12"/>
    </reaction>
</comment>
<comment type="cofactor">
    <cofactor evidence="1">
        <name>Zn(2+)</name>
        <dbReference type="ChEBI" id="CHEBI:29105"/>
    </cofactor>
    <text evidence="1">Binds 1 zinc ion per subunit. The zinc ion is important for the structural integrity of the protein.</text>
</comment>
<comment type="similarity">
    <text evidence="1">Belongs to the MsrB Met sulfoxide reductase family.</text>
</comment>
<sequence length="139" mass="15837">MGKVNKTDREWQRELSPEEYRITRQKGTEPAFTGQYWNTKQHGTYVCRCCGAELFSSDAKYDSGCGWPSFFRPLNGSVIDEHEDLTHGMVRTEIVCHDCEAHLGHVFEDGPQPTGLRYCVNSASLQLKTQEKNDEGTYP</sequence>
<organism>
    <name type="scientific">Acinetobacter baumannii (strain SDF)</name>
    <dbReference type="NCBI Taxonomy" id="509170"/>
    <lineage>
        <taxon>Bacteria</taxon>
        <taxon>Pseudomonadati</taxon>
        <taxon>Pseudomonadota</taxon>
        <taxon>Gammaproteobacteria</taxon>
        <taxon>Moraxellales</taxon>
        <taxon>Moraxellaceae</taxon>
        <taxon>Acinetobacter</taxon>
        <taxon>Acinetobacter calcoaceticus/baumannii complex</taxon>
    </lineage>
</organism>
<keyword id="KW-0479">Metal-binding</keyword>
<keyword id="KW-0560">Oxidoreductase</keyword>
<keyword id="KW-0862">Zinc</keyword>
<name>MSRB_ACIBS</name>
<dbReference type="EC" id="1.8.4.12" evidence="1"/>
<dbReference type="EMBL" id="CU468230">
    <property type="protein sequence ID" value="CAP01505.1"/>
    <property type="molecule type" value="Genomic_DNA"/>
</dbReference>
<dbReference type="SMR" id="B0VR86"/>
<dbReference type="KEGG" id="abm:ABSDF2180"/>
<dbReference type="HOGENOM" id="CLU_031040_8_5_6"/>
<dbReference type="Proteomes" id="UP000001741">
    <property type="component" value="Chromosome"/>
</dbReference>
<dbReference type="GO" id="GO:0005737">
    <property type="term" value="C:cytoplasm"/>
    <property type="evidence" value="ECO:0007669"/>
    <property type="project" value="TreeGrafter"/>
</dbReference>
<dbReference type="GO" id="GO:0033743">
    <property type="term" value="F:peptide-methionine (R)-S-oxide reductase activity"/>
    <property type="evidence" value="ECO:0007669"/>
    <property type="project" value="UniProtKB-UniRule"/>
</dbReference>
<dbReference type="GO" id="GO:0008270">
    <property type="term" value="F:zinc ion binding"/>
    <property type="evidence" value="ECO:0007669"/>
    <property type="project" value="UniProtKB-UniRule"/>
</dbReference>
<dbReference type="GO" id="GO:0030091">
    <property type="term" value="P:protein repair"/>
    <property type="evidence" value="ECO:0007669"/>
    <property type="project" value="InterPro"/>
</dbReference>
<dbReference type="GO" id="GO:0006979">
    <property type="term" value="P:response to oxidative stress"/>
    <property type="evidence" value="ECO:0007669"/>
    <property type="project" value="InterPro"/>
</dbReference>
<dbReference type="FunFam" id="2.170.150.20:FF:000001">
    <property type="entry name" value="Peptide methionine sulfoxide reductase MsrB"/>
    <property type="match status" value="1"/>
</dbReference>
<dbReference type="Gene3D" id="2.170.150.20">
    <property type="entry name" value="Peptide methionine sulfoxide reductase"/>
    <property type="match status" value="1"/>
</dbReference>
<dbReference type="HAMAP" id="MF_01400">
    <property type="entry name" value="MsrB"/>
    <property type="match status" value="1"/>
</dbReference>
<dbReference type="InterPro" id="IPR028427">
    <property type="entry name" value="Met_Sox_Rdtase_MsrB"/>
</dbReference>
<dbReference type="InterPro" id="IPR002579">
    <property type="entry name" value="Met_Sox_Rdtase_MsrB_dom"/>
</dbReference>
<dbReference type="InterPro" id="IPR011057">
    <property type="entry name" value="Mss4-like_sf"/>
</dbReference>
<dbReference type="NCBIfam" id="TIGR00357">
    <property type="entry name" value="peptide-methionine (R)-S-oxide reductase MsrB"/>
    <property type="match status" value="1"/>
</dbReference>
<dbReference type="PANTHER" id="PTHR10173">
    <property type="entry name" value="METHIONINE SULFOXIDE REDUCTASE"/>
    <property type="match status" value="1"/>
</dbReference>
<dbReference type="PANTHER" id="PTHR10173:SF52">
    <property type="entry name" value="METHIONINE-R-SULFOXIDE REDUCTASE B1"/>
    <property type="match status" value="1"/>
</dbReference>
<dbReference type="Pfam" id="PF01641">
    <property type="entry name" value="SelR"/>
    <property type="match status" value="1"/>
</dbReference>
<dbReference type="SUPFAM" id="SSF51316">
    <property type="entry name" value="Mss4-like"/>
    <property type="match status" value="1"/>
</dbReference>
<dbReference type="PROSITE" id="PS51790">
    <property type="entry name" value="MSRB"/>
    <property type="match status" value="1"/>
</dbReference>
<accession>B0VR86</accession>